<sequence>MQKKITIYTDGACSGNPGKGGWGAMLMYGDAVRELSGYSPATTNNRMELTAAIEALRALKEPCSVALYSDSSYVVNAFREGWLDRWTRNNWKTAAKKNVENTDLWKQILELTARHTVTFHKVKGHSDNPYNNRCDELARQAIQKKP</sequence>
<accession>Q3B2H0</accession>
<organism>
    <name type="scientific">Chlorobium luteolum (strain DSM 273 / BCRC 81028 / 2530)</name>
    <name type="common">Pelodictyon luteolum</name>
    <dbReference type="NCBI Taxonomy" id="319225"/>
    <lineage>
        <taxon>Bacteria</taxon>
        <taxon>Pseudomonadati</taxon>
        <taxon>Chlorobiota</taxon>
        <taxon>Chlorobiia</taxon>
        <taxon>Chlorobiales</taxon>
        <taxon>Chlorobiaceae</taxon>
        <taxon>Chlorobium/Pelodictyon group</taxon>
        <taxon>Pelodictyon</taxon>
    </lineage>
</organism>
<protein>
    <recommendedName>
        <fullName evidence="1">Ribonuclease H</fullName>
        <shortName evidence="1">RNase H</shortName>
        <ecNumber evidence="1">3.1.26.4</ecNumber>
    </recommendedName>
</protein>
<gene>
    <name evidence="1" type="primary">rnhA</name>
    <name type="ordered locus">Plut_1607</name>
</gene>
<comment type="function">
    <text evidence="1">Endonuclease that specifically degrades the RNA of RNA-DNA hybrids.</text>
</comment>
<comment type="catalytic activity">
    <reaction evidence="1">
        <text>Endonucleolytic cleavage to 5'-phosphomonoester.</text>
        <dbReference type="EC" id="3.1.26.4"/>
    </reaction>
</comment>
<comment type="cofactor">
    <cofactor evidence="1">
        <name>Mg(2+)</name>
        <dbReference type="ChEBI" id="CHEBI:18420"/>
    </cofactor>
    <text evidence="1">Binds 1 Mg(2+) ion per subunit. May bind a second metal ion at a regulatory site, or after substrate binding.</text>
</comment>
<comment type="subunit">
    <text evidence="1">Monomer.</text>
</comment>
<comment type="subcellular location">
    <subcellularLocation>
        <location evidence="1">Cytoplasm</location>
    </subcellularLocation>
</comment>
<comment type="similarity">
    <text evidence="1">Belongs to the RNase H family.</text>
</comment>
<comment type="sequence caution" evidence="3">
    <conflict type="erroneous initiation">
        <sequence resource="EMBL-CDS" id="ABB24461"/>
    </conflict>
</comment>
<evidence type="ECO:0000255" key="1">
    <source>
        <dbReference type="HAMAP-Rule" id="MF_00042"/>
    </source>
</evidence>
<evidence type="ECO:0000255" key="2">
    <source>
        <dbReference type="PROSITE-ProRule" id="PRU00408"/>
    </source>
</evidence>
<evidence type="ECO:0000305" key="3"/>
<reference key="1">
    <citation type="submission" date="2005-08" db="EMBL/GenBank/DDBJ databases">
        <title>Complete sequence of Pelodictyon luteolum DSM 273.</title>
        <authorList>
            <consortium name="US DOE Joint Genome Institute"/>
            <person name="Copeland A."/>
            <person name="Lucas S."/>
            <person name="Lapidus A."/>
            <person name="Barry K."/>
            <person name="Detter J.C."/>
            <person name="Glavina T."/>
            <person name="Hammon N."/>
            <person name="Israni S."/>
            <person name="Pitluck S."/>
            <person name="Bryant D."/>
            <person name="Schmutz J."/>
            <person name="Larimer F."/>
            <person name="Land M."/>
            <person name="Kyrpides N."/>
            <person name="Ivanova N."/>
            <person name="Richardson P."/>
        </authorList>
    </citation>
    <scope>NUCLEOTIDE SEQUENCE [LARGE SCALE GENOMIC DNA]</scope>
    <source>
        <strain>DSM 273 / BCRC 81028 / 2530</strain>
    </source>
</reference>
<keyword id="KW-0963">Cytoplasm</keyword>
<keyword id="KW-0255">Endonuclease</keyword>
<keyword id="KW-0378">Hydrolase</keyword>
<keyword id="KW-0460">Magnesium</keyword>
<keyword id="KW-0479">Metal-binding</keyword>
<keyword id="KW-0540">Nuclease</keyword>
<keyword id="KW-1185">Reference proteome</keyword>
<proteinExistence type="inferred from homology"/>
<name>RNH_CHLL3</name>
<feature type="chain" id="PRO_0000332645" description="Ribonuclease H">
    <location>
        <begin position="1"/>
        <end position="146"/>
    </location>
</feature>
<feature type="domain" description="RNase H type-1" evidence="2">
    <location>
        <begin position="1"/>
        <end position="143"/>
    </location>
</feature>
<feature type="binding site" evidence="1">
    <location>
        <position position="10"/>
    </location>
    <ligand>
        <name>Mg(2+)</name>
        <dbReference type="ChEBI" id="CHEBI:18420"/>
        <label>1</label>
    </ligand>
</feature>
<feature type="binding site" evidence="1">
    <location>
        <position position="10"/>
    </location>
    <ligand>
        <name>Mg(2+)</name>
        <dbReference type="ChEBI" id="CHEBI:18420"/>
        <label>2</label>
    </ligand>
</feature>
<feature type="binding site" evidence="1">
    <location>
        <position position="48"/>
    </location>
    <ligand>
        <name>Mg(2+)</name>
        <dbReference type="ChEBI" id="CHEBI:18420"/>
        <label>1</label>
    </ligand>
</feature>
<feature type="binding site" evidence="1">
    <location>
        <position position="70"/>
    </location>
    <ligand>
        <name>Mg(2+)</name>
        <dbReference type="ChEBI" id="CHEBI:18420"/>
        <label>1</label>
    </ligand>
</feature>
<feature type="binding site" evidence="1">
    <location>
        <position position="135"/>
    </location>
    <ligand>
        <name>Mg(2+)</name>
        <dbReference type="ChEBI" id="CHEBI:18420"/>
        <label>2</label>
    </ligand>
</feature>
<dbReference type="EC" id="3.1.26.4" evidence="1"/>
<dbReference type="EMBL" id="CP000096">
    <property type="protein sequence ID" value="ABB24461.1"/>
    <property type="status" value="ALT_INIT"/>
    <property type="molecule type" value="Genomic_DNA"/>
</dbReference>
<dbReference type="RefSeq" id="WP_041463885.1">
    <property type="nucleotide sequence ID" value="NC_007512.1"/>
</dbReference>
<dbReference type="SMR" id="Q3B2H0"/>
<dbReference type="STRING" id="319225.Plut_1607"/>
<dbReference type="KEGG" id="plt:Plut_1607"/>
<dbReference type="eggNOG" id="COG0328">
    <property type="taxonomic scope" value="Bacteria"/>
</dbReference>
<dbReference type="HOGENOM" id="CLU_030894_6_2_10"/>
<dbReference type="OrthoDB" id="7845843at2"/>
<dbReference type="Proteomes" id="UP000002709">
    <property type="component" value="Chromosome"/>
</dbReference>
<dbReference type="GO" id="GO:0005737">
    <property type="term" value="C:cytoplasm"/>
    <property type="evidence" value="ECO:0007669"/>
    <property type="project" value="UniProtKB-SubCell"/>
</dbReference>
<dbReference type="GO" id="GO:0000287">
    <property type="term" value="F:magnesium ion binding"/>
    <property type="evidence" value="ECO:0007669"/>
    <property type="project" value="UniProtKB-UniRule"/>
</dbReference>
<dbReference type="GO" id="GO:0003676">
    <property type="term" value="F:nucleic acid binding"/>
    <property type="evidence" value="ECO:0007669"/>
    <property type="project" value="InterPro"/>
</dbReference>
<dbReference type="GO" id="GO:0004523">
    <property type="term" value="F:RNA-DNA hybrid ribonuclease activity"/>
    <property type="evidence" value="ECO:0007669"/>
    <property type="project" value="UniProtKB-UniRule"/>
</dbReference>
<dbReference type="GO" id="GO:0043137">
    <property type="term" value="P:DNA replication, removal of RNA primer"/>
    <property type="evidence" value="ECO:0007669"/>
    <property type="project" value="TreeGrafter"/>
</dbReference>
<dbReference type="CDD" id="cd09278">
    <property type="entry name" value="RNase_HI_prokaryote_like"/>
    <property type="match status" value="1"/>
</dbReference>
<dbReference type="FunFam" id="3.30.420.10:FF:000089">
    <property type="entry name" value="Ribonuclease H"/>
    <property type="match status" value="1"/>
</dbReference>
<dbReference type="Gene3D" id="3.30.420.10">
    <property type="entry name" value="Ribonuclease H-like superfamily/Ribonuclease H"/>
    <property type="match status" value="1"/>
</dbReference>
<dbReference type="HAMAP" id="MF_00042">
    <property type="entry name" value="RNase_H"/>
    <property type="match status" value="1"/>
</dbReference>
<dbReference type="InterPro" id="IPR050092">
    <property type="entry name" value="RNase_H"/>
</dbReference>
<dbReference type="InterPro" id="IPR012337">
    <property type="entry name" value="RNaseH-like_sf"/>
</dbReference>
<dbReference type="InterPro" id="IPR002156">
    <property type="entry name" value="RNaseH_domain"/>
</dbReference>
<dbReference type="InterPro" id="IPR036397">
    <property type="entry name" value="RNaseH_sf"/>
</dbReference>
<dbReference type="InterPro" id="IPR022892">
    <property type="entry name" value="RNaseHI"/>
</dbReference>
<dbReference type="NCBIfam" id="NF001236">
    <property type="entry name" value="PRK00203.1"/>
    <property type="match status" value="1"/>
</dbReference>
<dbReference type="PANTHER" id="PTHR10642">
    <property type="entry name" value="RIBONUCLEASE H1"/>
    <property type="match status" value="1"/>
</dbReference>
<dbReference type="PANTHER" id="PTHR10642:SF26">
    <property type="entry name" value="RIBONUCLEASE H1"/>
    <property type="match status" value="1"/>
</dbReference>
<dbReference type="Pfam" id="PF00075">
    <property type="entry name" value="RNase_H"/>
    <property type="match status" value="1"/>
</dbReference>
<dbReference type="SUPFAM" id="SSF53098">
    <property type="entry name" value="Ribonuclease H-like"/>
    <property type="match status" value="1"/>
</dbReference>
<dbReference type="PROSITE" id="PS50879">
    <property type="entry name" value="RNASE_H_1"/>
    <property type="match status" value="1"/>
</dbReference>